<evidence type="ECO:0000255" key="1">
    <source>
        <dbReference type="HAMAP-Rule" id="MF_01382"/>
    </source>
</evidence>
<name>SECA_RHILO</name>
<gene>
    <name evidence="1" type="primary">secA</name>
    <name type="ordered locus">mlr3468</name>
</gene>
<reference key="1">
    <citation type="journal article" date="2000" name="DNA Res.">
        <title>Complete genome structure of the nitrogen-fixing symbiotic bacterium Mesorhizobium loti.</title>
        <authorList>
            <person name="Kaneko T."/>
            <person name="Nakamura Y."/>
            <person name="Sato S."/>
            <person name="Asamizu E."/>
            <person name="Kato T."/>
            <person name="Sasamoto S."/>
            <person name="Watanabe A."/>
            <person name="Idesawa K."/>
            <person name="Ishikawa A."/>
            <person name="Kawashima K."/>
            <person name="Kimura T."/>
            <person name="Kishida Y."/>
            <person name="Kiyokawa C."/>
            <person name="Kohara M."/>
            <person name="Matsumoto M."/>
            <person name="Matsuno A."/>
            <person name="Mochizuki Y."/>
            <person name="Nakayama S."/>
            <person name="Nakazaki N."/>
            <person name="Shimpo S."/>
            <person name="Sugimoto M."/>
            <person name="Takeuchi C."/>
            <person name="Yamada M."/>
            <person name="Tabata S."/>
        </authorList>
    </citation>
    <scope>NUCLEOTIDE SEQUENCE [LARGE SCALE GENOMIC DNA]</scope>
    <source>
        <strain>LMG 29417 / CECT 9101 / MAFF 303099</strain>
    </source>
</reference>
<accession>Q98G67</accession>
<keyword id="KW-0067">ATP-binding</keyword>
<keyword id="KW-0997">Cell inner membrane</keyword>
<keyword id="KW-1003">Cell membrane</keyword>
<keyword id="KW-0963">Cytoplasm</keyword>
<keyword id="KW-0472">Membrane</keyword>
<keyword id="KW-0479">Metal-binding</keyword>
<keyword id="KW-0547">Nucleotide-binding</keyword>
<keyword id="KW-0653">Protein transport</keyword>
<keyword id="KW-1278">Translocase</keyword>
<keyword id="KW-0811">Translocation</keyword>
<keyword id="KW-0813">Transport</keyword>
<keyword id="KW-0862">Zinc</keyword>
<comment type="function">
    <text evidence="1">Part of the Sec protein translocase complex. Interacts with the SecYEG preprotein conducting channel. Has a central role in coupling the hydrolysis of ATP to the transfer of proteins into and across the cell membrane, serving both as a receptor for the preprotein-SecB complex and as an ATP-driven molecular motor driving the stepwise translocation of polypeptide chains across the membrane.</text>
</comment>
<comment type="catalytic activity">
    <reaction evidence="1">
        <text>ATP + H2O + cellular proteinSide 1 = ADP + phosphate + cellular proteinSide 2.</text>
        <dbReference type="EC" id="7.4.2.8"/>
    </reaction>
</comment>
<comment type="cofactor">
    <cofactor evidence="1">
        <name>Zn(2+)</name>
        <dbReference type="ChEBI" id="CHEBI:29105"/>
    </cofactor>
    <text evidence="1">May bind 1 zinc ion per subunit.</text>
</comment>
<comment type="subunit">
    <text evidence="1">Monomer and homodimer. Part of the essential Sec protein translocation apparatus which comprises SecA, SecYEG and auxiliary proteins SecDF-YajC and YidC.</text>
</comment>
<comment type="subcellular location">
    <subcellularLocation>
        <location evidence="1">Cell inner membrane</location>
        <topology evidence="1">Peripheral membrane protein</topology>
        <orientation evidence="1">Cytoplasmic side</orientation>
    </subcellularLocation>
    <subcellularLocation>
        <location evidence="1">Cytoplasm</location>
    </subcellularLocation>
    <text evidence="1">Distribution is 50-50.</text>
</comment>
<comment type="similarity">
    <text evidence="1">Belongs to the SecA family.</text>
</comment>
<sequence length="910" mass="102078">MVSLGGLARKVFGSSNDRRVKSTRPRVEAINAMENEMRALSDTELAGRTEKFRQDIANGASLDDLLVPAFATAREAARRVLGMRPFDVQLIGGMVLHNGGIAEMRTGEGKTLVATLPVYLNALAGKGVHVVTVNDYLATRDSEWMGRVYKFLGLSVGVIVHGLSDEERRVAYASDVTYATNNELGFDYLRDNMKYERAQMVQRGHNYAIVDEVDSILVDEARTPLIISGPLEDRSEMYNTIDTFIIQLQPQDYEIDEKQKTSIFTEEGTEKLENLLRDADLLKGESLYDVENVAIVHHVNNALKAHRLFQKDKDYIVRNGEIVIIDEFTGRMMPGRRYSEGLHQALEAKEHVAIQPENQTLASVTFQNYFRLYKKLSGMTGTALTEAEEFGNIYGLEVTEIPTNLPVIRKDEDDEVYRTVEEKYKAIVKEIREASAKGQPTLVGTTSIEKSEQLADRLRKEGFKDFEVLNARHHEREAAIVAQAGKPGAITIATNMAGRGTDIKLGGNAEMRIADELGDMPEGPEREAREKEIIADVERLKEKALAAGGLYVLATERHESRRIDNQLRGRSGRQGDPGRSKFFLSLQDDLMRIFGSERMDGMLQKLGLKEDEAIIHPWINKALEKAQKKVEARNFDIRKNLLKYDDVSNDQRKVVFEQRIELMDGEGLSETIAEMREGVIDEIVAKAIPENAYAEQWDVAGLKAEVAEFLNLDLPVEDWAKEEGIAEDDIRERITQAADAAAKERAERFGPEVMNYVERSVVLQTLDHLWREHIVNLDHLRSVVGFRGYAQRDPLQEYKGEAFELFQAMLGNLRQAVTAQLMRVELVRQAAEAPPPEAPDMFGTHIDGTTGENDFEGGETALLVRQEQNAVVAPEDRDPNNQATWGKVGRNEACPCGSGKKYKHCHGAFA</sequence>
<proteinExistence type="inferred from homology"/>
<feature type="chain" id="PRO_0000320916" description="Protein translocase subunit SecA">
    <location>
        <begin position="1"/>
        <end position="910"/>
    </location>
</feature>
<feature type="binding site" evidence="1">
    <location>
        <position position="89"/>
    </location>
    <ligand>
        <name>ATP</name>
        <dbReference type="ChEBI" id="CHEBI:30616"/>
    </ligand>
</feature>
<feature type="binding site" evidence="1">
    <location>
        <begin position="107"/>
        <end position="111"/>
    </location>
    <ligand>
        <name>ATP</name>
        <dbReference type="ChEBI" id="CHEBI:30616"/>
    </ligand>
</feature>
<feature type="binding site" evidence="1">
    <location>
        <position position="502"/>
    </location>
    <ligand>
        <name>ATP</name>
        <dbReference type="ChEBI" id="CHEBI:30616"/>
    </ligand>
</feature>
<feature type="binding site" evidence="1">
    <location>
        <position position="894"/>
    </location>
    <ligand>
        <name>Zn(2+)</name>
        <dbReference type="ChEBI" id="CHEBI:29105"/>
    </ligand>
</feature>
<feature type="binding site" evidence="1">
    <location>
        <position position="896"/>
    </location>
    <ligand>
        <name>Zn(2+)</name>
        <dbReference type="ChEBI" id="CHEBI:29105"/>
    </ligand>
</feature>
<feature type="binding site" evidence="1">
    <location>
        <position position="905"/>
    </location>
    <ligand>
        <name>Zn(2+)</name>
        <dbReference type="ChEBI" id="CHEBI:29105"/>
    </ligand>
</feature>
<feature type="binding site" evidence="1">
    <location>
        <position position="906"/>
    </location>
    <ligand>
        <name>Zn(2+)</name>
        <dbReference type="ChEBI" id="CHEBI:29105"/>
    </ligand>
</feature>
<dbReference type="EC" id="7.4.2.8" evidence="1"/>
<dbReference type="EMBL" id="BA000012">
    <property type="protein sequence ID" value="BAB50349.1"/>
    <property type="molecule type" value="Genomic_DNA"/>
</dbReference>
<dbReference type="RefSeq" id="WP_010911695.1">
    <property type="nucleotide sequence ID" value="NC_002678.2"/>
</dbReference>
<dbReference type="SMR" id="Q98G67"/>
<dbReference type="GeneID" id="66681871"/>
<dbReference type="KEGG" id="mlo:mlr3468"/>
<dbReference type="eggNOG" id="COG0653">
    <property type="taxonomic scope" value="Bacteria"/>
</dbReference>
<dbReference type="HOGENOM" id="CLU_005314_3_0_5"/>
<dbReference type="Proteomes" id="UP000000552">
    <property type="component" value="Chromosome"/>
</dbReference>
<dbReference type="GO" id="GO:0031522">
    <property type="term" value="C:cell envelope Sec protein transport complex"/>
    <property type="evidence" value="ECO:0007669"/>
    <property type="project" value="TreeGrafter"/>
</dbReference>
<dbReference type="GO" id="GO:0005829">
    <property type="term" value="C:cytosol"/>
    <property type="evidence" value="ECO:0007669"/>
    <property type="project" value="TreeGrafter"/>
</dbReference>
<dbReference type="GO" id="GO:0005886">
    <property type="term" value="C:plasma membrane"/>
    <property type="evidence" value="ECO:0007669"/>
    <property type="project" value="UniProtKB-SubCell"/>
</dbReference>
<dbReference type="GO" id="GO:0005524">
    <property type="term" value="F:ATP binding"/>
    <property type="evidence" value="ECO:0007669"/>
    <property type="project" value="UniProtKB-UniRule"/>
</dbReference>
<dbReference type="GO" id="GO:0046872">
    <property type="term" value="F:metal ion binding"/>
    <property type="evidence" value="ECO:0007669"/>
    <property type="project" value="UniProtKB-KW"/>
</dbReference>
<dbReference type="GO" id="GO:0008564">
    <property type="term" value="F:protein-exporting ATPase activity"/>
    <property type="evidence" value="ECO:0007669"/>
    <property type="project" value="UniProtKB-EC"/>
</dbReference>
<dbReference type="GO" id="GO:0065002">
    <property type="term" value="P:intracellular protein transmembrane transport"/>
    <property type="evidence" value="ECO:0007669"/>
    <property type="project" value="UniProtKB-UniRule"/>
</dbReference>
<dbReference type="GO" id="GO:0017038">
    <property type="term" value="P:protein import"/>
    <property type="evidence" value="ECO:0007669"/>
    <property type="project" value="InterPro"/>
</dbReference>
<dbReference type="GO" id="GO:0006605">
    <property type="term" value="P:protein targeting"/>
    <property type="evidence" value="ECO:0007669"/>
    <property type="project" value="UniProtKB-UniRule"/>
</dbReference>
<dbReference type="GO" id="GO:0043952">
    <property type="term" value="P:protein transport by the Sec complex"/>
    <property type="evidence" value="ECO:0007669"/>
    <property type="project" value="TreeGrafter"/>
</dbReference>
<dbReference type="CDD" id="cd17928">
    <property type="entry name" value="DEXDc_SecA"/>
    <property type="match status" value="1"/>
</dbReference>
<dbReference type="CDD" id="cd18803">
    <property type="entry name" value="SF2_C_secA"/>
    <property type="match status" value="1"/>
</dbReference>
<dbReference type="FunFam" id="3.90.1440.10:FF:000001">
    <property type="entry name" value="Preprotein translocase subunit SecA"/>
    <property type="match status" value="1"/>
</dbReference>
<dbReference type="FunFam" id="1.10.3060.10:FF:000003">
    <property type="entry name" value="Protein translocase subunit SecA"/>
    <property type="match status" value="1"/>
</dbReference>
<dbReference type="FunFam" id="3.40.50.300:FF:000334">
    <property type="entry name" value="Protein translocase subunit SecA"/>
    <property type="match status" value="1"/>
</dbReference>
<dbReference type="FunFam" id="3.40.50.300:FF:001790">
    <property type="entry name" value="Protein translocase subunit SecA"/>
    <property type="match status" value="1"/>
</dbReference>
<dbReference type="Gene3D" id="1.10.3060.10">
    <property type="entry name" value="Helical scaffold and wing domains of SecA"/>
    <property type="match status" value="1"/>
</dbReference>
<dbReference type="Gene3D" id="3.40.50.300">
    <property type="entry name" value="P-loop containing nucleotide triphosphate hydrolases"/>
    <property type="match status" value="2"/>
</dbReference>
<dbReference type="Gene3D" id="3.90.1440.10">
    <property type="entry name" value="SecA, preprotein cross-linking domain"/>
    <property type="match status" value="1"/>
</dbReference>
<dbReference type="HAMAP" id="MF_01382">
    <property type="entry name" value="SecA"/>
    <property type="match status" value="1"/>
</dbReference>
<dbReference type="InterPro" id="IPR014001">
    <property type="entry name" value="Helicase_ATP-bd"/>
</dbReference>
<dbReference type="InterPro" id="IPR001650">
    <property type="entry name" value="Helicase_C-like"/>
</dbReference>
<dbReference type="InterPro" id="IPR027417">
    <property type="entry name" value="P-loop_NTPase"/>
</dbReference>
<dbReference type="InterPro" id="IPR004027">
    <property type="entry name" value="SEC_C_motif"/>
</dbReference>
<dbReference type="InterPro" id="IPR000185">
    <property type="entry name" value="SecA"/>
</dbReference>
<dbReference type="InterPro" id="IPR020937">
    <property type="entry name" value="SecA_CS"/>
</dbReference>
<dbReference type="InterPro" id="IPR011115">
    <property type="entry name" value="SecA_DEAD"/>
</dbReference>
<dbReference type="InterPro" id="IPR014018">
    <property type="entry name" value="SecA_motor_DEAD"/>
</dbReference>
<dbReference type="InterPro" id="IPR011130">
    <property type="entry name" value="SecA_preprotein_X-link_dom"/>
</dbReference>
<dbReference type="InterPro" id="IPR044722">
    <property type="entry name" value="SecA_SF2_C"/>
</dbReference>
<dbReference type="InterPro" id="IPR011116">
    <property type="entry name" value="SecA_Wing/Scaffold"/>
</dbReference>
<dbReference type="InterPro" id="IPR036266">
    <property type="entry name" value="SecA_Wing/Scaffold_sf"/>
</dbReference>
<dbReference type="InterPro" id="IPR036670">
    <property type="entry name" value="SecA_X-link_sf"/>
</dbReference>
<dbReference type="NCBIfam" id="NF009538">
    <property type="entry name" value="PRK12904.1"/>
    <property type="match status" value="1"/>
</dbReference>
<dbReference type="NCBIfam" id="TIGR00963">
    <property type="entry name" value="secA"/>
    <property type="match status" value="1"/>
</dbReference>
<dbReference type="PANTHER" id="PTHR30612:SF0">
    <property type="entry name" value="CHLOROPLAST PROTEIN-TRANSPORTING ATPASE"/>
    <property type="match status" value="1"/>
</dbReference>
<dbReference type="PANTHER" id="PTHR30612">
    <property type="entry name" value="SECA INNER MEMBRANE COMPONENT OF SEC PROTEIN SECRETION SYSTEM"/>
    <property type="match status" value="1"/>
</dbReference>
<dbReference type="Pfam" id="PF21090">
    <property type="entry name" value="P-loop_SecA"/>
    <property type="match status" value="1"/>
</dbReference>
<dbReference type="Pfam" id="PF02810">
    <property type="entry name" value="SEC-C"/>
    <property type="match status" value="1"/>
</dbReference>
<dbReference type="Pfam" id="PF07517">
    <property type="entry name" value="SecA_DEAD"/>
    <property type="match status" value="1"/>
</dbReference>
<dbReference type="Pfam" id="PF01043">
    <property type="entry name" value="SecA_PP_bind"/>
    <property type="match status" value="1"/>
</dbReference>
<dbReference type="Pfam" id="PF07516">
    <property type="entry name" value="SecA_SW"/>
    <property type="match status" value="1"/>
</dbReference>
<dbReference type="PRINTS" id="PR00906">
    <property type="entry name" value="SECA"/>
</dbReference>
<dbReference type="SMART" id="SM00957">
    <property type="entry name" value="SecA_DEAD"/>
    <property type="match status" value="1"/>
</dbReference>
<dbReference type="SMART" id="SM00958">
    <property type="entry name" value="SecA_PP_bind"/>
    <property type="match status" value="1"/>
</dbReference>
<dbReference type="SUPFAM" id="SSF81886">
    <property type="entry name" value="Helical scaffold and wing domains of SecA"/>
    <property type="match status" value="1"/>
</dbReference>
<dbReference type="SUPFAM" id="SSF52540">
    <property type="entry name" value="P-loop containing nucleoside triphosphate hydrolases"/>
    <property type="match status" value="2"/>
</dbReference>
<dbReference type="SUPFAM" id="SSF81767">
    <property type="entry name" value="Pre-protein crosslinking domain of SecA"/>
    <property type="match status" value="1"/>
</dbReference>
<dbReference type="PROSITE" id="PS01312">
    <property type="entry name" value="SECA"/>
    <property type="match status" value="1"/>
</dbReference>
<dbReference type="PROSITE" id="PS51196">
    <property type="entry name" value="SECA_MOTOR_DEAD"/>
    <property type="match status" value="1"/>
</dbReference>
<protein>
    <recommendedName>
        <fullName evidence="1">Protein translocase subunit SecA</fullName>
        <ecNumber evidence="1">7.4.2.8</ecNumber>
    </recommendedName>
</protein>
<organism>
    <name type="scientific">Mesorhizobium japonicum (strain LMG 29417 / CECT 9101 / MAFF 303099)</name>
    <name type="common">Mesorhizobium loti (strain MAFF 303099)</name>
    <dbReference type="NCBI Taxonomy" id="266835"/>
    <lineage>
        <taxon>Bacteria</taxon>
        <taxon>Pseudomonadati</taxon>
        <taxon>Pseudomonadota</taxon>
        <taxon>Alphaproteobacteria</taxon>
        <taxon>Hyphomicrobiales</taxon>
        <taxon>Phyllobacteriaceae</taxon>
        <taxon>Mesorhizobium</taxon>
    </lineage>
</organism>